<proteinExistence type="evidence at transcript level"/>
<feature type="chain" id="PRO_0000280542" description="Reticulon-3-A">
    <location>
        <begin position="1"/>
        <end position="214"/>
    </location>
</feature>
<feature type="transmembrane region" description="Helical" evidence="2">
    <location>
        <begin position="46"/>
        <end position="66"/>
    </location>
</feature>
<feature type="transmembrane region" description="Helical" evidence="2">
    <location>
        <begin position="155"/>
        <end position="175"/>
    </location>
</feature>
<feature type="domain" description="Reticulon" evidence="3">
    <location>
        <begin position="26"/>
        <end position="214"/>
    </location>
</feature>
<feature type="region of interest" description="Disordered" evidence="4">
    <location>
        <begin position="1"/>
        <end position="21"/>
    </location>
</feature>
<feature type="sequence conflict" description="In Ref. 1; AAS85780." evidence="6" ref="1">
    <original>V</original>
    <variation>I</variation>
    <location>
        <position position="152"/>
    </location>
</feature>
<feature type="sequence conflict" description="In Ref. 1; AAS85780." evidence="6" ref="1">
    <original>T</original>
    <variation>A</variation>
    <location>
        <position position="169"/>
    </location>
</feature>
<feature type="sequence conflict" description="In Ref. 1; AAS85780." evidence="6" ref="1">
    <original>API</original>
    <variation>TPL</variation>
    <location>
        <begin position="172"/>
        <end position="174"/>
    </location>
</feature>
<feature type="sequence conflict" description="In Ref. 1; AAS85780." evidence="6" ref="1">
    <original>K</original>
    <variation>R</variation>
    <location>
        <position position="178"/>
    </location>
</feature>
<comment type="function">
    <text evidence="1">May be involved in membrane trafficking in the early secretory pathway.</text>
</comment>
<comment type="subunit">
    <text evidence="1">Homodimer.</text>
</comment>
<comment type="subcellular location">
    <subcellularLocation>
        <location evidence="5">Endoplasmic reticulum membrane</location>
        <topology evidence="2">Multi-pass membrane protein</topology>
    </subcellularLocation>
    <subcellularLocation>
        <location evidence="1">Golgi apparatus membrane</location>
        <topology evidence="2">Multi-pass membrane protein</topology>
    </subcellularLocation>
</comment>
<comment type="tissue specificity">
    <text evidence="5">Expressed in the animal hemisphere at the four-cell stage. During gastrulation, expression becomes restricted to the prospective neuroectoderm. At the early tail bud stage, expressed in the head structure. At the tadpole stage, expressed in head and neural tissues including the otic vesicle and optic nerve.</text>
</comment>
<comment type="developmental stage">
    <text evidence="5">Expressed both maternally and zygotically.</text>
</comment>
<protein>
    <recommendedName>
        <fullName>Reticulon-3-A</fullName>
    </recommendedName>
    <alternativeName>
        <fullName>RTN3.1</fullName>
    </alternativeName>
</protein>
<keyword id="KW-0256">Endoplasmic reticulum</keyword>
<keyword id="KW-0931">ER-Golgi transport</keyword>
<keyword id="KW-0333">Golgi apparatus</keyword>
<keyword id="KW-0472">Membrane</keyword>
<keyword id="KW-1185">Reference proteome</keyword>
<keyword id="KW-0812">Transmembrane</keyword>
<keyword id="KW-1133">Transmembrane helix</keyword>
<keyword id="KW-0813">Transport</keyword>
<reference key="1">
    <citation type="journal article" date="2005" name="Dev. Dyn.">
        <title>Identification and expression of XRTN2 and XRTN3 during Xenopus development.</title>
        <authorList>
            <person name="Park E.C."/>
            <person name="Shim S."/>
            <person name="Han J.-K."/>
        </authorList>
    </citation>
    <scope>NUCLEOTIDE SEQUENCE [MRNA]</scope>
    <scope>SUBCELLULAR LOCATION</scope>
    <scope>TISSUE SPECIFICITY</scope>
    <scope>DEVELOPMENTAL STAGE</scope>
</reference>
<reference key="2">
    <citation type="submission" date="2004-06" db="EMBL/GenBank/DDBJ databases">
        <authorList>
            <consortium name="NIH - Xenopus Gene Collection (XGC) project"/>
        </authorList>
    </citation>
    <scope>NUCLEOTIDE SEQUENCE [LARGE SCALE MRNA]</scope>
    <source>
        <tissue>Brain</tissue>
        <tissue>Spleen</tissue>
    </source>
</reference>
<reference key="3">
    <citation type="journal article" date="2003" name="FASEB J.">
        <title>A reticular rhapsody: phylogenic evolution and nomenclature of the RTN/Nogo gene family.</title>
        <authorList>
            <person name="Oertle T."/>
            <person name="Klinger M."/>
            <person name="Stuermer C.A.O."/>
            <person name="Schwab M.E."/>
        </authorList>
    </citation>
    <scope>IDENTIFICATION</scope>
</reference>
<evidence type="ECO:0000250" key="1">
    <source>
        <dbReference type="UniProtKB" id="O95197"/>
    </source>
</evidence>
<evidence type="ECO:0000255" key="2"/>
<evidence type="ECO:0000255" key="3">
    <source>
        <dbReference type="PROSITE-ProRule" id="PRU00170"/>
    </source>
</evidence>
<evidence type="ECO:0000256" key="4">
    <source>
        <dbReference type="SAM" id="MobiDB-lite"/>
    </source>
</evidence>
<evidence type="ECO:0000269" key="5">
    <source>
    </source>
</evidence>
<evidence type="ECO:0000305" key="6"/>
<organism>
    <name type="scientific">Xenopus laevis</name>
    <name type="common">African clawed frog</name>
    <dbReference type="NCBI Taxonomy" id="8355"/>
    <lineage>
        <taxon>Eukaryota</taxon>
        <taxon>Metazoa</taxon>
        <taxon>Chordata</taxon>
        <taxon>Craniata</taxon>
        <taxon>Vertebrata</taxon>
        <taxon>Euteleostomi</taxon>
        <taxon>Amphibia</taxon>
        <taxon>Batrachia</taxon>
        <taxon>Anura</taxon>
        <taxon>Pipoidea</taxon>
        <taxon>Pipidae</taxon>
        <taxon>Xenopodinae</taxon>
        <taxon>Xenopus</taxon>
        <taxon>Xenopus</taxon>
    </lineage>
</organism>
<name>RTN3A_XENLA</name>
<sequence>MAETSGPQSSHISSSSVGEKGSGCAVRDLLYWRDVKQSGMVFGGTMVLLLSLAAFSIISVISYLVLSLLTVTISYRVYKSVLQAVQKTDEGHPFKPLLEKDITLSSDSFQKALTASLAHVNHALKYIVRLFLVDDLVDSLKLALLMWLMTYVGAVFNGITLLILGVLLTFTAPIVYEKYKVQIDHYVSLVHSQVKSITEKIQAKLPGALKKKSE</sequence>
<accession>Q5J6M8</accession>
<accession>Q6IFY3</accession>
<dbReference type="EMBL" id="AY495964">
    <property type="protein sequence ID" value="AAS85780.1"/>
    <property type="molecule type" value="mRNA"/>
</dbReference>
<dbReference type="EMBL" id="BC073245">
    <property type="protein sequence ID" value="AAH73245.1"/>
    <property type="molecule type" value="mRNA"/>
</dbReference>
<dbReference type="EMBL" id="CD256485">
    <property type="status" value="NOT_ANNOTATED_CDS"/>
    <property type="molecule type" value="mRNA"/>
</dbReference>
<dbReference type="EMBL" id="BK004012">
    <property type="protein sequence ID" value="DAA02074.1"/>
    <property type="molecule type" value="mRNA"/>
</dbReference>
<dbReference type="SMR" id="Q5J6M8"/>
<dbReference type="DNASU" id="444146"/>
<dbReference type="GeneID" id="444146"/>
<dbReference type="KEGG" id="xla:444146"/>
<dbReference type="AGR" id="Xenbase:XB-GENE-975132"/>
<dbReference type="CTD" id="444146"/>
<dbReference type="Xenbase" id="XB-GENE-975132">
    <property type="gene designation" value="rtn3.L"/>
</dbReference>
<dbReference type="OrthoDB" id="567788at2759"/>
<dbReference type="Proteomes" id="UP000186698">
    <property type="component" value="Chromosome 4L"/>
</dbReference>
<dbReference type="Bgee" id="444146">
    <property type="expression patterns" value="Expressed in brain and 19 other cell types or tissues"/>
</dbReference>
<dbReference type="GO" id="GO:0005783">
    <property type="term" value="C:endoplasmic reticulum"/>
    <property type="evidence" value="ECO:0000250"/>
    <property type="project" value="UniProtKB"/>
</dbReference>
<dbReference type="GO" id="GO:0005789">
    <property type="term" value="C:endoplasmic reticulum membrane"/>
    <property type="evidence" value="ECO:0000318"/>
    <property type="project" value="GO_Central"/>
</dbReference>
<dbReference type="GO" id="GO:0005794">
    <property type="term" value="C:Golgi apparatus"/>
    <property type="evidence" value="ECO:0000250"/>
    <property type="project" value="UniProtKB"/>
</dbReference>
<dbReference type="GO" id="GO:0000139">
    <property type="term" value="C:Golgi membrane"/>
    <property type="evidence" value="ECO:0007669"/>
    <property type="project" value="UniProtKB-SubCell"/>
</dbReference>
<dbReference type="GO" id="GO:0043005">
    <property type="term" value="C:neuron projection"/>
    <property type="evidence" value="ECO:0000318"/>
    <property type="project" value="GO_Central"/>
</dbReference>
<dbReference type="GO" id="GO:0014069">
    <property type="term" value="C:postsynaptic density"/>
    <property type="evidence" value="ECO:0000318"/>
    <property type="project" value="GO_Central"/>
</dbReference>
<dbReference type="GO" id="GO:0007420">
    <property type="term" value="P:brain development"/>
    <property type="evidence" value="ECO:0000318"/>
    <property type="project" value="GO_Central"/>
</dbReference>
<dbReference type="GO" id="GO:0071787">
    <property type="term" value="P:endoplasmic reticulum tubular network formation"/>
    <property type="evidence" value="ECO:0000318"/>
    <property type="project" value="GO_Central"/>
</dbReference>
<dbReference type="GO" id="GO:1902430">
    <property type="term" value="P:negative regulation of amyloid-beta formation"/>
    <property type="evidence" value="ECO:0000250"/>
    <property type="project" value="UniProtKB"/>
</dbReference>
<dbReference type="GO" id="GO:0030182">
    <property type="term" value="P:neuron differentiation"/>
    <property type="evidence" value="ECO:0000318"/>
    <property type="project" value="GO_Central"/>
</dbReference>
<dbReference type="GO" id="GO:0016192">
    <property type="term" value="P:vesicle-mediated transport"/>
    <property type="evidence" value="ECO:0007669"/>
    <property type="project" value="UniProtKB-KW"/>
</dbReference>
<dbReference type="Gene3D" id="1.20.5.2480">
    <property type="match status" value="1"/>
</dbReference>
<dbReference type="InterPro" id="IPR003388">
    <property type="entry name" value="Reticulon"/>
</dbReference>
<dbReference type="InterPro" id="IPR046964">
    <property type="entry name" value="RTN1-4"/>
</dbReference>
<dbReference type="PANTHER" id="PTHR45799:SF4">
    <property type="entry name" value="RETICULON-3"/>
    <property type="match status" value="1"/>
</dbReference>
<dbReference type="PANTHER" id="PTHR45799">
    <property type="entry name" value="RETICULON-LIKE PROTEIN"/>
    <property type="match status" value="1"/>
</dbReference>
<dbReference type="Pfam" id="PF02453">
    <property type="entry name" value="Reticulon"/>
    <property type="match status" value="1"/>
</dbReference>
<dbReference type="PROSITE" id="PS50845">
    <property type="entry name" value="RETICULON"/>
    <property type="match status" value="1"/>
</dbReference>
<gene>
    <name type="primary">rtn3-a</name>
</gene>